<protein>
    <recommendedName>
        <fullName>Protein FAM110D</fullName>
    </recommendedName>
</protein>
<name>F110D_HUMAN</name>
<gene>
    <name type="primary">FAM110D</name>
    <name type="synonym">GRRP1</name>
</gene>
<keyword id="KW-1267">Proteomics identification</keyword>
<keyword id="KW-1185">Reference proteome</keyword>
<accession>Q8TAY7</accession>
<accession>A8K3V0</accession>
<accession>Q9H7Z4</accession>
<dbReference type="EMBL" id="AK024112">
    <property type="protein sequence ID" value="BAB14829.1"/>
    <property type="status" value="ALT_FRAME"/>
    <property type="molecule type" value="mRNA"/>
</dbReference>
<dbReference type="EMBL" id="AK290715">
    <property type="protein sequence ID" value="BAF83404.1"/>
    <property type="molecule type" value="mRNA"/>
</dbReference>
<dbReference type="EMBL" id="AL391650">
    <property type="status" value="NOT_ANNOTATED_CDS"/>
    <property type="molecule type" value="Genomic_DNA"/>
</dbReference>
<dbReference type="EMBL" id="BC025658">
    <property type="protein sequence ID" value="AAH25658.1"/>
    <property type="molecule type" value="mRNA"/>
</dbReference>
<dbReference type="CCDS" id="CCDS41285.1"/>
<dbReference type="RefSeq" id="NP_079145.2">
    <property type="nucleotide sequence ID" value="NM_024869.3"/>
</dbReference>
<dbReference type="BioGRID" id="123003">
    <property type="interactions" value="27"/>
</dbReference>
<dbReference type="FunCoup" id="Q8TAY7">
    <property type="interactions" value="2"/>
</dbReference>
<dbReference type="IntAct" id="Q8TAY7">
    <property type="interactions" value="25"/>
</dbReference>
<dbReference type="STRING" id="9606.ENSP00000363386"/>
<dbReference type="GlyGen" id="Q8TAY7">
    <property type="glycosylation" value="1 site"/>
</dbReference>
<dbReference type="iPTMnet" id="Q8TAY7"/>
<dbReference type="PhosphoSitePlus" id="Q8TAY7"/>
<dbReference type="BioMuta" id="FAM110D"/>
<dbReference type="DMDM" id="74751367"/>
<dbReference type="MassIVE" id="Q8TAY7"/>
<dbReference type="PaxDb" id="9606-ENSP00000363386"/>
<dbReference type="PeptideAtlas" id="Q8TAY7"/>
<dbReference type="Antibodypedia" id="2884">
    <property type="antibodies" value="71 antibodies from 15 providers"/>
</dbReference>
<dbReference type="DNASU" id="79927"/>
<dbReference type="Ensembl" id="ENST00000374268.5">
    <property type="protein sequence ID" value="ENSP00000363386.3"/>
    <property type="gene ID" value="ENSG00000197245.6"/>
</dbReference>
<dbReference type="GeneID" id="79927"/>
<dbReference type="KEGG" id="hsa:79927"/>
<dbReference type="MANE-Select" id="ENST00000374268.5">
    <property type="protein sequence ID" value="ENSP00000363386.3"/>
    <property type="RefSeq nucleotide sequence ID" value="NM_024869.3"/>
    <property type="RefSeq protein sequence ID" value="NP_079145.2"/>
</dbReference>
<dbReference type="UCSC" id="uc001blk.3">
    <property type="organism name" value="human"/>
</dbReference>
<dbReference type="AGR" id="HGNC:25860"/>
<dbReference type="CTD" id="79927"/>
<dbReference type="DisGeNET" id="79927"/>
<dbReference type="GeneCards" id="FAM110D"/>
<dbReference type="HGNC" id="HGNC:25860">
    <property type="gene designation" value="FAM110D"/>
</dbReference>
<dbReference type="HPA" id="ENSG00000197245">
    <property type="expression patterns" value="Low tissue specificity"/>
</dbReference>
<dbReference type="neXtProt" id="NX_Q8TAY7"/>
<dbReference type="OpenTargets" id="ENSG00000197245"/>
<dbReference type="PharmGKB" id="PA142671706"/>
<dbReference type="VEuPathDB" id="HostDB:ENSG00000197245"/>
<dbReference type="eggNOG" id="ENOG502S0DB">
    <property type="taxonomic scope" value="Eukaryota"/>
</dbReference>
<dbReference type="GeneTree" id="ENSGT00950000183056"/>
<dbReference type="HOGENOM" id="CLU_050540_1_0_1"/>
<dbReference type="InParanoid" id="Q8TAY7"/>
<dbReference type="OMA" id="YGCQRAW"/>
<dbReference type="OrthoDB" id="10028183at2759"/>
<dbReference type="PAN-GO" id="Q8TAY7">
    <property type="GO annotations" value="0 GO annotations based on evolutionary models"/>
</dbReference>
<dbReference type="PhylomeDB" id="Q8TAY7"/>
<dbReference type="TreeFam" id="TF330964"/>
<dbReference type="PathwayCommons" id="Q8TAY7"/>
<dbReference type="BioGRID-ORCS" id="79927">
    <property type="hits" value="10 hits in 1156 CRISPR screens"/>
</dbReference>
<dbReference type="GenomeRNAi" id="79927"/>
<dbReference type="Pharos" id="Q8TAY7">
    <property type="development level" value="Tdark"/>
</dbReference>
<dbReference type="PRO" id="PR:Q8TAY7"/>
<dbReference type="Proteomes" id="UP000005640">
    <property type="component" value="Chromosome 1"/>
</dbReference>
<dbReference type="RNAct" id="Q8TAY7">
    <property type="molecule type" value="protein"/>
</dbReference>
<dbReference type="Bgee" id="ENSG00000197245">
    <property type="expression patterns" value="Expressed in left uterine tube and 102 other cell types or tissues"/>
</dbReference>
<dbReference type="InterPro" id="IPR025740">
    <property type="entry name" value="FAM110"/>
</dbReference>
<dbReference type="InterPro" id="IPR025741">
    <property type="entry name" value="FAM110_C"/>
</dbReference>
<dbReference type="InterPro" id="IPR025739">
    <property type="entry name" value="FAM110_N"/>
</dbReference>
<dbReference type="PANTHER" id="PTHR14758">
    <property type="entry name" value="AGAP005440-PA"/>
    <property type="match status" value="1"/>
</dbReference>
<dbReference type="PANTHER" id="PTHR14758:SF3">
    <property type="entry name" value="PROTEIN FAM110D"/>
    <property type="match status" value="1"/>
</dbReference>
<dbReference type="Pfam" id="PF14160">
    <property type="entry name" value="FAM110_C"/>
    <property type="match status" value="1"/>
</dbReference>
<dbReference type="Pfam" id="PF14161">
    <property type="entry name" value="FAM110_N"/>
    <property type="match status" value="1"/>
</dbReference>
<organism>
    <name type="scientific">Homo sapiens</name>
    <name type="common">Human</name>
    <dbReference type="NCBI Taxonomy" id="9606"/>
    <lineage>
        <taxon>Eukaryota</taxon>
        <taxon>Metazoa</taxon>
        <taxon>Chordata</taxon>
        <taxon>Craniata</taxon>
        <taxon>Vertebrata</taxon>
        <taxon>Euteleostomi</taxon>
        <taxon>Mammalia</taxon>
        <taxon>Eutheria</taxon>
        <taxon>Euarchontoglires</taxon>
        <taxon>Primates</taxon>
        <taxon>Haplorrhini</taxon>
        <taxon>Catarrhini</taxon>
        <taxon>Hominidae</taxon>
        <taxon>Homo</taxon>
    </lineage>
</organism>
<proteinExistence type="evidence at protein level"/>
<sequence>MLLAPPSTPSRGRTPSAVERLEADKAKYVKTHQVIARRQEPALRGSPGPLTPHPCNELGPPASPRTPRPVRRGSGRRLPRPDSLIFYRQKRDCKASVNKENAKGQGLVRRLFLGAPRDAAPSSPASTERPAASGGWAAPQDAPEAAGKRALCPTCSLPLSEKERFFNYCGLERALVEVLGAERFSPQSWGADASPQAGTSPPPGSGDASDWTSSDRGVDSPGGAGGGGGSEAAGSARDRRPPVSVVERNARVIQWLYGCQRARGPPRESEV</sequence>
<evidence type="ECO:0000256" key="1">
    <source>
        <dbReference type="SAM" id="MobiDB-lite"/>
    </source>
</evidence>
<evidence type="ECO:0000269" key="2">
    <source>
    </source>
</evidence>
<evidence type="ECO:0000305" key="3"/>
<reference key="1">
    <citation type="journal article" date="2004" name="Nat. Genet.">
        <title>Complete sequencing and characterization of 21,243 full-length human cDNAs.</title>
        <authorList>
            <person name="Ota T."/>
            <person name="Suzuki Y."/>
            <person name="Nishikawa T."/>
            <person name="Otsuki T."/>
            <person name="Sugiyama T."/>
            <person name="Irie R."/>
            <person name="Wakamatsu A."/>
            <person name="Hayashi K."/>
            <person name="Sato H."/>
            <person name="Nagai K."/>
            <person name="Kimura K."/>
            <person name="Makita H."/>
            <person name="Sekine M."/>
            <person name="Obayashi M."/>
            <person name="Nishi T."/>
            <person name="Shibahara T."/>
            <person name="Tanaka T."/>
            <person name="Ishii S."/>
            <person name="Yamamoto J."/>
            <person name="Saito K."/>
            <person name="Kawai Y."/>
            <person name="Isono Y."/>
            <person name="Nakamura Y."/>
            <person name="Nagahari K."/>
            <person name="Murakami K."/>
            <person name="Yasuda T."/>
            <person name="Iwayanagi T."/>
            <person name="Wagatsuma M."/>
            <person name="Shiratori A."/>
            <person name="Sudo H."/>
            <person name="Hosoiri T."/>
            <person name="Kaku Y."/>
            <person name="Kodaira H."/>
            <person name="Kondo H."/>
            <person name="Sugawara M."/>
            <person name="Takahashi M."/>
            <person name="Kanda K."/>
            <person name="Yokoi T."/>
            <person name="Furuya T."/>
            <person name="Kikkawa E."/>
            <person name="Omura Y."/>
            <person name="Abe K."/>
            <person name="Kamihara K."/>
            <person name="Katsuta N."/>
            <person name="Sato K."/>
            <person name="Tanikawa M."/>
            <person name="Yamazaki M."/>
            <person name="Ninomiya K."/>
            <person name="Ishibashi T."/>
            <person name="Yamashita H."/>
            <person name="Murakawa K."/>
            <person name="Fujimori K."/>
            <person name="Tanai H."/>
            <person name="Kimata M."/>
            <person name="Watanabe M."/>
            <person name="Hiraoka S."/>
            <person name="Chiba Y."/>
            <person name="Ishida S."/>
            <person name="Ono Y."/>
            <person name="Takiguchi S."/>
            <person name="Watanabe S."/>
            <person name="Yosida M."/>
            <person name="Hotuta T."/>
            <person name="Kusano J."/>
            <person name="Kanehori K."/>
            <person name="Takahashi-Fujii A."/>
            <person name="Hara H."/>
            <person name="Tanase T.-O."/>
            <person name="Nomura Y."/>
            <person name="Togiya S."/>
            <person name="Komai F."/>
            <person name="Hara R."/>
            <person name="Takeuchi K."/>
            <person name="Arita M."/>
            <person name="Imose N."/>
            <person name="Musashino K."/>
            <person name="Yuuki H."/>
            <person name="Oshima A."/>
            <person name="Sasaki N."/>
            <person name="Aotsuka S."/>
            <person name="Yoshikawa Y."/>
            <person name="Matsunawa H."/>
            <person name="Ichihara T."/>
            <person name="Shiohata N."/>
            <person name="Sano S."/>
            <person name="Moriya S."/>
            <person name="Momiyama H."/>
            <person name="Satoh N."/>
            <person name="Takami S."/>
            <person name="Terashima Y."/>
            <person name="Suzuki O."/>
            <person name="Nakagawa S."/>
            <person name="Senoh A."/>
            <person name="Mizoguchi H."/>
            <person name="Goto Y."/>
            <person name="Shimizu F."/>
            <person name="Wakebe H."/>
            <person name="Hishigaki H."/>
            <person name="Watanabe T."/>
            <person name="Sugiyama A."/>
            <person name="Takemoto M."/>
            <person name="Kawakami B."/>
            <person name="Yamazaki M."/>
            <person name="Watanabe K."/>
            <person name="Kumagai A."/>
            <person name="Itakura S."/>
            <person name="Fukuzumi Y."/>
            <person name="Fujimori Y."/>
            <person name="Komiyama M."/>
            <person name="Tashiro H."/>
            <person name="Tanigami A."/>
            <person name="Fujiwara T."/>
            <person name="Ono T."/>
            <person name="Yamada K."/>
            <person name="Fujii Y."/>
            <person name="Ozaki K."/>
            <person name="Hirao M."/>
            <person name="Ohmori Y."/>
            <person name="Kawabata A."/>
            <person name="Hikiji T."/>
            <person name="Kobatake N."/>
            <person name="Inagaki H."/>
            <person name="Ikema Y."/>
            <person name="Okamoto S."/>
            <person name="Okitani R."/>
            <person name="Kawakami T."/>
            <person name="Noguchi S."/>
            <person name="Itoh T."/>
            <person name="Shigeta K."/>
            <person name="Senba T."/>
            <person name="Matsumura K."/>
            <person name="Nakajima Y."/>
            <person name="Mizuno T."/>
            <person name="Morinaga M."/>
            <person name="Sasaki M."/>
            <person name="Togashi T."/>
            <person name="Oyama M."/>
            <person name="Hata H."/>
            <person name="Watanabe M."/>
            <person name="Komatsu T."/>
            <person name="Mizushima-Sugano J."/>
            <person name="Satoh T."/>
            <person name="Shirai Y."/>
            <person name="Takahashi Y."/>
            <person name="Nakagawa K."/>
            <person name="Okumura K."/>
            <person name="Nagase T."/>
            <person name="Nomura N."/>
            <person name="Kikuchi H."/>
            <person name="Masuho Y."/>
            <person name="Yamashita R."/>
            <person name="Nakai K."/>
            <person name="Yada T."/>
            <person name="Nakamura Y."/>
            <person name="Ohara O."/>
            <person name="Isogai T."/>
            <person name="Sugano S."/>
        </authorList>
    </citation>
    <scope>NUCLEOTIDE SEQUENCE [LARGE SCALE MRNA]</scope>
    <scope>VARIANT ARG-53</scope>
    <source>
        <tissue>Embryo</tissue>
        <tissue>Lung</tissue>
    </source>
</reference>
<reference key="2">
    <citation type="journal article" date="2006" name="Nature">
        <title>The DNA sequence and biological annotation of human chromosome 1.</title>
        <authorList>
            <person name="Gregory S.G."/>
            <person name="Barlow K.F."/>
            <person name="McLay K.E."/>
            <person name="Kaul R."/>
            <person name="Swarbreck D."/>
            <person name="Dunham A."/>
            <person name="Scott C.E."/>
            <person name="Howe K.L."/>
            <person name="Woodfine K."/>
            <person name="Spencer C.C.A."/>
            <person name="Jones M.C."/>
            <person name="Gillson C."/>
            <person name="Searle S."/>
            <person name="Zhou Y."/>
            <person name="Kokocinski F."/>
            <person name="McDonald L."/>
            <person name="Evans R."/>
            <person name="Phillips K."/>
            <person name="Atkinson A."/>
            <person name="Cooper R."/>
            <person name="Jones C."/>
            <person name="Hall R.E."/>
            <person name="Andrews T.D."/>
            <person name="Lloyd C."/>
            <person name="Ainscough R."/>
            <person name="Almeida J.P."/>
            <person name="Ambrose K.D."/>
            <person name="Anderson F."/>
            <person name="Andrew R.W."/>
            <person name="Ashwell R.I.S."/>
            <person name="Aubin K."/>
            <person name="Babbage A.K."/>
            <person name="Bagguley C.L."/>
            <person name="Bailey J."/>
            <person name="Beasley H."/>
            <person name="Bethel G."/>
            <person name="Bird C.P."/>
            <person name="Bray-Allen S."/>
            <person name="Brown J.Y."/>
            <person name="Brown A.J."/>
            <person name="Buckley D."/>
            <person name="Burton J."/>
            <person name="Bye J."/>
            <person name="Carder C."/>
            <person name="Chapman J.C."/>
            <person name="Clark S.Y."/>
            <person name="Clarke G."/>
            <person name="Clee C."/>
            <person name="Cobley V."/>
            <person name="Collier R.E."/>
            <person name="Corby N."/>
            <person name="Coville G.J."/>
            <person name="Davies J."/>
            <person name="Deadman R."/>
            <person name="Dunn M."/>
            <person name="Earthrowl M."/>
            <person name="Ellington A.G."/>
            <person name="Errington H."/>
            <person name="Frankish A."/>
            <person name="Frankland J."/>
            <person name="French L."/>
            <person name="Garner P."/>
            <person name="Garnett J."/>
            <person name="Gay L."/>
            <person name="Ghori M.R.J."/>
            <person name="Gibson R."/>
            <person name="Gilby L.M."/>
            <person name="Gillett W."/>
            <person name="Glithero R.J."/>
            <person name="Grafham D.V."/>
            <person name="Griffiths C."/>
            <person name="Griffiths-Jones S."/>
            <person name="Grocock R."/>
            <person name="Hammond S."/>
            <person name="Harrison E.S.I."/>
            <person name="Hart E."/>
            <person name="Haugen E."/>
            <person name="Heath P.D."/>
            <person name="Holmes S."/>
            <person name="Holt K."/>
            <person name="Howden P.J."/>
            <person name="Hunt A.R."/>
            <person name="Hunt S.E."/>
            <person name="Hunter G."/>
            <person name="Isherwood J."/>
            <person name="James R."/>
            <person name="Johnson C."/>
            <person name="Johnson D."/>
            <person name="Joy A."/>
            <person name="Kay M."/>
            <person name="Kershaw J.K."/>
            <person name="Kibukawa M."/>
            <person name="Kimberley A.M."/>
            <person name="King A."/>
            <person name="Knights A.J."/>
            <person name="Lad H."/>
            <person name="Laird G."/>
            <person name="Lawlor S."/>
            <person name="Leongamornlert D.A."/>
            <person name="Lloyd D.M."/>
            <person name="Loveland J."/>
            <person name="Lovell J."/>
            <person name="Lush M.J."/>
            <person name="Lyne R."/>
            <person name="Martin S."/>
            <person name="Mashreghi-Mohammadi M."/>
            <person name="Matthews L."/>
            <person name="Matthews N.S.W."/>
            <person name="McLaren S."/>
            <person name="Milne S."/>
            <person name="Mistry S."/>
            <person name="Moore M.J.F."/>
            <person name="Nickerson T."/>
            <person name="O'Dell C.N."/>
            <person name="Oliver K."/>
            <person name="Palmeiri A."/>
            <person name="Palmer S.A."/>
            <person name="Parker A."/>
            <person name="Patel D."/>
            <person name="Pearce A.V."/>
            <person name="Peck A.I."/>
            <person name="Pelan S."/>
            <person name="Phelps K."/>
            <person name="Phillimore B.J."/>
            <person name="Plumb R."/>
            <person name="Rajan J."/>
            <person name="Raymond C."/>
            <person name="Rouse G."/>
            <person name="Saenphimmachak C."/>
            <person name="Sehra H.K."/>
            <person name="Sheridan E."/>
            <person name="Shownkeen R."/>
            <person name="Sims S."/>
            <person name="Skuce C.D."/>
            <person name="Smith M."/>
            <person name="Steward C."/>
            <person name="Subramanian S."/>
            <person name="Sycamore N."/>
            <person name="Tracey A."/>
            <person name="Tromans A."/>
            <person name="Van Helmond Z."/>
            <person name="Wall M."/>
            <person name="Wallis J.M."/>
            <person name="White S."/>
            <person name="Whitehead S.L."/>
            <person name="Wilkinson J.E."/>
            <person name="Willey D.L."/>
            <person name="Williams H."/>
            <person name="Wilming L."/>
            <person name="Wray P.W."/>
            <person name="Wu Z."/>
            <person name="Coulson A."/>
            <person name="Vaudin M."/>
            <person name="Sulston J.E."/>
            <person name="Durbin R.M."/>
            <person name="Hubbard T."/>
            <person name="Wooster R."/>
            <person name="Dunham I."/>
            <person name="Carter N.P."/>
            <person name="McVean G."/>
            <person name="Ross M.T."/>
            <person name="Harrow J."/>
            <person name="Olson M.V."/>
            <person name="Beck S."/>
            <person name="Rogers J."/>
            <person name="Bentley D.R."/>
        </authorList>
    </citation>
    <scope>NUCLEOTIDE SEQUENCE [LARGE SCALE GENOMIC DNA]</scope>
</reference>
<reference key="3">
    <citation type="journal article" date="2004" name="Genome Res.">
        <title>The status, quality, and expansion of the NIH full-length cDNA project: the Mammalian Gene Collection (MGC).</title>
        <authorList>
            <consortium name="The MGC Project Team"/>
        </authorList>
    </citation>
    <scope>NUCLEOTIDE SEQUENCE [LARGE SCALE MRNA]</scope>
    <source>
        <tissue>Brain</tissue>
    </source>
</reference>
<comment type="similarity">
    <text evidence="3">Belongs to the FAM110 family.</text>
</comment>
<comment type="sequence caution" evidence="3">
    <conflict type="frameshift">
        <sequence resource="EMBL-CDS" id="BAB14829"/>
    </conflict>
</comment>
<feature type="chain" id="PRO_0000318716" description="Protein FAM110D">
    <location>
        <begin position="1"/>
        <end position="271"/>
    </location>
</feature>
<feature type="region of interest" description="Disordered" evidence="1">
    <location>
        <begin position="1"/>
        <end position="83"/>
    </location>
</feature>
<feature type="region of interest" description="Disordered" evidence="1">
    <location>
        <begin position="116"/>
        <end position="145"/>
    </location>
</feature>
<feature type="region of interest" description="Disordered" evidence="1">
    <location>
        <begin position="186"/>
        <end position="245"/>
    </location>
</feature>
<feature type="compositionally biased region" description="Basic residues" evidence="1">
    <location>
        <begin position="68"/>
        <end position="78"/>
    </location>
</feature>
<feature type="compositionally biased region" description="Low complexity" evidence="1">
    <location>
        <begin position="116"/>
        <end position="126"/>
    </location>
</feature>
<feature type="compositionally biased region" description="Gly residues" evidence="1">
    <location>
        <begin position="220"/>
        <end position="231"/>
    </location>
</feature>
<feature type="sequence variant" id="VAR_038860" description="In dbSNP:rs3748856." evidence="2">
    <original>H</original>
    <variation>R</variation>
    <location>
        <position position="53"/>
    </location>
</feature>